<organism>
    <name type="scientific">Streptococcus suis (strain 05ZYH33)</name>
    <dbReference type="NCBI Taxonomy" id="391295"/>
    <lineage>
        <taxon>Bacteria</taxon>
        <taxon>Bacillati</taxon>
        <taxon>Bacillota</taxon>
        <taxon>Bacilli</taxon>
        <taxon>Lactobacillales</taxon>
        <taxon>Streptococcaceae</taxon>
        <taxon>Streptococcus</taxon>
    </lineage>
</organism>
<evidence type="ECO:0000255" key="1">
    <source>
        <dbReference type="HAMAP-Rule" id="MF_01241"/>
    </source>
</evidence>
<feature type="chain" id="PRO_1000067031" description="Glucosamine-6-phosphate deaminase">
    <location>
        <begin position="1"/>
        <end position="234"/>
    </location>
</feature>
<feature type="active site" description="Proton acceptor; for enolization step" evidence="1">
    <location>
        <position position="62"/>
    </location>
</feature>
<feature type="active site" description="For ring-opening step" evidence="1">
    <location>
        <position position="128"/>
    </location>
</feature>
<feature type="active site" description="Proton acceptor; for ring-opening step" evidence="1">
    <location>
        <position position="130"/>
    </location>
</feature>
<feature type="active site" description="For ring-opening step" evidence="1">
    <location>
        <position position="135"/>
    </location>
</feature>
<gene>
    <name evidence="1" type="primary">nagB</name>
    <name type="ordered locus">SSU05_0634</name>
</gene>
<sequence>MKIHVVNNQVEGATVALDILREKLNGGTKVLGLATGSSPLEFYRLIRESDLDFSDVTSVNLDEYVGLGEESDQSYIHFMKENLFNTKPFKQSYLPNGLATDVVAETERYNKILAEHPVDFQILGIGRNGHIGFNEPGAPFDGQTHLVELAPSTIEANARFFDNPEDVPKQAISMGIANIMAAKTIVLMAYGQEKADAIKATVEGAVTEDVPASVLQNHDNVILILDQAAASKLV</sequence>
<reference key="1">
    <citation type="journal article" date="2007" name="PLoS ONE">
        <title>A glimpse of streptococcal toxic shock syndrome from comparative genomics of S. suis 2 Chinese isolates.</title>
        <authorList>
            <person name="Chen C."/>
            <person name="Tang J."/>
            <person name="Dong W."/>
            <person name="Wang C."/>
            <person name="Feng Y."/>
            <person name="Wang J."/>
            <person name="Zheng F."/>
            <person name="Pan X."/>
            <person name="Liu D."/>
            <person name="Li M."/>
            <person name="Song Y."/>
            <person name="Zhu X."/>
            <person name="Sun H."/>
            <person name="Feng T."/>
            <person name="Guo Z."/>
            <person name="Ju A."/>
            <person name="Ge J."/>
            <person name="Dong Y."/>
            <person name="Sun W."/>
            <person name="Jiang Y."/>
            <person name="Wang J."/>
            <person name="Yan J."/>
            <person name="Yang H."/>
            <person name="Wang X."/>
            <person name="Gao G.F."/>
            <person name="Yang R."/>
            <person name="Wang J."/>
            <person name="Yu J."/>
        </authorList>
    </citation>
    <scope>NUCLEOTIDE SEQUENCE [LARGE SCALE GENOMIC DNA]</scope>
    <source>
        <strain>05ZYH33</strain>
    </source>
</reference>
<name>NAGB_STRSY</name>
<proteinExistence type="inferred from homology"/>
<keyword id="KW-0119">Carbohydrate metabolism</keyword>
<keyword id="KW-0378">Hydrolase</keyword>
<accession>A4VU11</accession>
<dbReference type="EC" id="3.5.99.6" evidence="1"/>
<dbReference type="EMBL" id="CP000407">
    <property type="protein sequence ID" value="ABP89600.1"/>
    <property type="molecule type" value="Genomic_DNA"/>
</dbReference>
<dbReference type="SMR" id="A4VU11"/>
<dbReference type="STRING" id="391295.SSU05_0634"/>
<dbReference type="KEGG" id="ssu:SSU05_0634"/>
<dbReference type="eggNOG" id="COG0363">
    <property type="taxonomic scope" value="Bacteria"/>
</dbReference>
<dbReference type="HOGENOM" id="CLU_049611_1_0_9"/>
<dbReference type="UniPathway" id="UPA00629">
    <property type="reaction ID" value="UER00684"/>
</dbReference>
<dbReference type="GO" id="GO:0005737">
    <property type="term" value="C:cytoplasm"/>
    <property type="evidence" value="ECO:0007669"/>
    <property type="project" value="TreeGrafter"/>
</dbReference>
<dbReference type="GO" id="GO:0004342">
    <property type="term" value="F:glucosamine-6-phosphate deaminase activity"/>
    <property type="evidence" value="ECO:0007669"/>
    <property type="project" value="UniProtKB-UniRule"/>
</dbReference>
<dbReference type="GO" id="GO:0042802">
    <property type="term" value="F:identical protein binding"/>
    <property type="evidence" value="ECO:0007669"/>
    <property type="project" value="TreeGrafter"/>
</dbReference>
<dbReference type="GO" id="GO:0005975">
    <property type="term" value="P:carbohydrate metabolic process"/>
    <property type="evidence" value="ECO:0007669"/>
    <property type="project" value="InterPro"/>
</dbReference>
<dbReference type="GO" id="GO:0006043">
    <property type="term" value="P:glucosamine catabolic process"/>
    <property type="evidence" value="ECO:0007669"/>
    <property type="project" value="TreeGrafter"/>
</dbReference>
<dbReference type="GO" id="GO:0006046">
    <property type="term" value="P:N-acetylglucosamine catabolic process"/>
    <property type="evidence" value="ECO:0007669"/>
    <property type="project" value="TreeGrafter"/>
</dbReference>
<dbReference type="GO" id="GO:0019262">
    <property type="term" value="P:N-acetylneuraminate catabolic process"/>
    <property type="evidence" value="ECO:0007669"/>
    <property type="project" value="UniProtKB-UniRule"/>
</dbReference>
<dbReference type="CDD" id="cd01399">
    <property type="entry name" value="GlcN6P_deaminase"/>
    <property type="match status" value="1"/>
</dbReference>
<dbReference type="FunFam" id="3.40.50.1360:FF:000003">
    <property type="entry name" value="Glucosamine-6-phosphate deaminase"/>
    <property type="match status" value="1"/>
</dbReference>
<dbReference type="Gene3D" id="3.40.50.1360">
    <property type="match status" value="1"/>
</dbReference>
<dbReference type="HAMAP" id="MF_01241">
    <property type="entry name" value="GlcN6P_deamin"/>
    <property type="match status" value="1"/>
</dbReference>
<dbReference type="InterPro" id="IPR006148">
    <property type="entry name" value="Glc/Gal-6P_isomerase"/>
</dbReference>
<dbReference type="InterPro" id="IPR004547">
    <property type="entry name" value="Glucosamine6P_isomerase"/>
</dbReference>
<dbReference type="InterPro" id="IPR018321">
    <property type="entry name" value="Glucosamine6P_isomerase_CS"/>
</dbReference>
<dbReference type="InterPro" id="IPR037171">
    <property type="entry name" value="NagB/RpiA_transferase-like"/>
</dbReference>
<dbReference type="PANTHER" id="PTHR11280">
    <property type="entry name" value="GLUCOSAMINE-6-PHOSPHATE ISOMERASE"/>
    <property type="match status" value="1"/>
</dbReference>
<dbReference type="PANTHER" id="PTHR11280:SF5">
    <property type="entry name" value="GLUCOSAMINE-6-PHOSPHATE ISOMERASE"/>
    <property type="match status" value="1"/>
</dbReference>
<dbReference type="Pfam" id="PF01182">
    <property type="entry name" value="Glucosamine_iso"/>
    <property type="match status" value="1"/>
</dbReference>
<dbReference type="SUPFAM" id="SSF100950">
    <property type="entry name" value="NagB/RpiA/CoA transferase-like"/>
    <property type="match status" value="1"/>
</dbReference>
<dbReference type="PROSITE" id="PS01161">
    <property type="entry name" value="GLC_GALNAC_ISOMERASE"/>
    <property type="match status" value="1"/>
</dbReference>
<comment type="function">
    <text evidence="1">Catalyzes the reversible isomerization-deamination of glucosamine 6-phosphate (GlcN6P) to form fructose 6-phosphate (Fru6P) and ammonium ion.</text>
</comment>
<comment type="catalytic activity">
    <reaction evidence="1">
        <text>alpha-D-glucosamine 6-phosphate + H2O = beta-D-fructose 6-phosphate + NH4(+)</text>
        <dbReference type="Rhea" id="RHEA:12172"/>
        <dbReference type="ChEBI" id="CHEBI:15377"/>
        <dbReference type="ChEBI" id="CHEBI:28938"/>
        <dbReference type="ChEBI" id="CHEBI:57634"/>
        <dbReference type="ChEBI" id="CHEBI:75989"/>
        <dbReference type="EC" id="3.5.99.6"/>
    </reaction>
</comment>
<comment type="pathway">
    <text evidence="1">Amino-sugar metabolism; N-acetylneuraminate degradation; D-fructose 6-phosphate from N-acetylneuraminate: step 5/5.</text>
</comment>
<comment type="similarity">
    <text evidence="1">Belongs to the glucosamine/galactosamine-6-phosphate isomerase family. NagB subfamily.</text>
</comment>
<protein>
    <recommendedName>
        <fullName evidence="1">Glucosamine-6-phosphate deaminase</fullName>
        <ecNumber evidence="1">3.5.99.6</ecNumber>
    </recommendedName>
    <alternativeName>
        <fullName evidence="1">GlcN6P deaminase</fullName>
        <shortName evidence="1">GNPDA</shortName>
    </alternativeName>
    <alternativeName>
        <fullName evidence="1">Glucosamine-6-phosphate isomerase</fullName>
    </alternativeName>
</protein>